<proteinExistence type="inferred from homology"/>
<protein>
    <recommendedName>
        <fullName evidence="1">Protein-L-isoaspartate O-methyltransferase 2</fullName>
        <ecNumber evidence="1">2.1.1.77</ecNumber>
    </recommendedName>
    <alternativeName>
        <fullName evidence="1">L-isoaspartyl protein carboxyl methyltransferase 2</fullName>
    </alternativeName>
    <alternativeName>
        <fullName evidence="1">Protein L-isoaspartyl methyltransferase 2</fullName>
    </alternativeName>
    <alternativeName>
        <fullName evidence="1">Protein-beta-aspartate methyltransferase 2</fullName>
        <shortName evidence="1">PIMT 2</shortName>
    </alternativeName>
</protein>
<reference key="1">
    <citation type="submission" date="2006-01" db="EMBL/GenBank/DDBJ databases">
        <title>Complete sequence of Rhodopseudomonas palustris HaA2.</title>
        <authorList>
            <consortium name="US DOE Joint Genome Institute"/>
            <person name="Copeland A."/>
            <person name="Lucas S."/>
            <person name="Lapidus A."/>
            <person name="Barry K."/>
            <person name="Detter J.C."/>
            <person name="Glavina T."/>
            <person name="Hammon N."/>
            <person name="Israni S."/>
            <person name="Pitluck S."/>
            <person name="Chain P."/>
            <person name="Malfatti S."/>
            <person name="Shin M."/>
            <person name="Vergez L."/>
            <person name="Schmutz J."/>
            <person name="Larimer F."/>
            <person name="Land M."/>
            <person name="Hauser L."/>
            <person name="Pelletier D.A."/>
            <person name="Kyrpides N."/>
            <person name="Anderson I."/>
            <person name="Oda Y."/>
            <person name="Harwood C.S."/>
            <person name="Richardson P."/>
        </authorList>
    </citation>
    <scope>NUCLEOTIDE SEQUENCE [LARGE SCALE GENOMIC DNA]</scope>
    <source>
        <strain>HaA2</strain>
    </source>
</reference>
<sequence>MISSVAPPPEKMLFQLSLRRRGISDRGVLQAMESVPRDRFVDAVHRDSAWRDTALPIACGQTISQPFVVAYMTEQLHLQPGHRVLEIGTGSGYHAAVLSRLVRDVVSVERFKTLADRARARLKELNYANVEVVLGDGFALPEGQGTFDRILVTAAMAELPQPLLDLLDPDGILIAPIGPGNGRQTLIRVQRKDDGFLRKPLVDVRFVPALPGIAREL</sequence>
<comment type="function">
    <text evidence="1">Catalyzes the methyl esterification of L-isoaspartyl residues in peptides and proteins that result from spontaneous decomposition of normal L-aspartyl and L-asparaginyl residues. It plays a role in the repair and/or degradation of damaged proteins.</text>
</comment>
<comment type="catalytic activity">
    <reaction evidence="1">
        <text>[protein]-L-isoaspartate + S-adenosyl-L-methionine = [protein]-L-isoaspartate alpha-methyl ester + S-adenosyl-L-homocysteine</text>
        <dbReference type="Rhea" id="RHEA:12705"/>
        <dbReference type="Rhea" id="RHEA-COMP:12143"/>
        <dbReference type="Rhea" id="RHEA-COMP:12144"/>
        <dbReference type="ChEBI" id="CHEBI:57856"/>
        <dbReference type="ChEBI" id="CHEBI:59789"/>
        <dbReference type="ChEBI" id="CHEBI:90596"/>
        <dbReference type="ChEBI" id="CHEBI:90598"/>
        <dbReference type="EC" id="2.1.1.77"/>
    </reaction>
</comment>
<comment type="subcellular location">
    <subcellularLocation>
        <location evidence="1">Cytoplasm</location>
    </subcellularLocation>
</comment>
<comment type="similarity">
    <text evidence="1">Belongs to the methyltransferase superfamily. L-isoaspartyl/D-aspartyl protein methyltransferase family.</text>
</comment>
<dbReference type="EC" id="2.1.1.77" evidence="1"/>
<dbReference type="EMBL" id="CP000250">
    <property type="protein sequence ID" value="ABD07439.1"/>
    <property type="molecule type" value="Genomic_DNA"/>
</dbReference>
<dbReference type="RefSeq" id="WP_011441624.1">
    <property type="nucleotide sequence ID" value="NC_007778.1"/>
</dbReference>
<dbReference type="SMR" id="Q2IWH1"/>
<dbReference type="STRING" id="316058.RPB_2737"/>
<dbReference type="KEGG" id="rpb:RPB_2737"/>
<dbReference type="eggNOG" id="COG2518">
    <property type="taxonomic scope" value="Bacteria"/>
</dbReference>
<dbReference type="HOGENOM" id="CLU_055432_2_0_5"/>
<dbReference type="OrthoDB" id="9810066at2"/>
<dbReference type="Proteomes" id="UP000008809">
    <property type="component" value="Chromosome"/>
</dbReference>
<dbReference type="GO" id="GO:0005737">
    <property type="term" value="C:cytoplasm"/>
    <property type="evidence" value="ECO:0007669"/>
    <property type="project" value="UniProtKB-SubCell"/>
</dbReference>
<dbReference type="GO" id="GO:0004719">
    <property type="term" value="F:protein-L-isoaspartate (D-aspartate) O-methyltransferase activity"/>
    <property type="evidence" value="ECO:0007669"/>
    <property type="project" value="UniProtKB-UniRule"/>
</dbReference>
<dbReference type="GO" id="GO:0032259">
    <property type="term" value="P:methylation"/>
    <property type="evidence" value="ECO:0007669"/>
    <property type="project" value="UniProtKB-KW"/>
</dbReference>
<dbReference type="GO" id="GO:0036211">
    <property type="term" value="P:protein modification process"/>
    <property type="evidence" value="ECO:0007669"/>
    <property type="project" value="UniProtKB-UniRule"/>
</dbReference>
<dbReference type="GO" id="GO:0030091">
    <property type="term" value="P:protein repair"/>
    <property type="evidence" value="ECO:0007669"/>
    <property type="project" value="UniProtKB-UniRule"/>
</dbReference>
<dbReference type="CDD" id="cd02440">
    <property type="entry name" value="AdoMet_MTases"/>
    <property type="match status" value="1"/>
</dbReference>
<dbReference type="FunFam" id="3.40.50.150:FF:000010">
    <property type="entry name" value="Protein-L-isoaspartate O-methyltransferase"/>
    <property type="match status" value="1"/>
</dbReference>
<dbReference type="Gene3D" id="3.40.50.150">
    <property type="entry name" value="Vaccinia Virus protein VP39"/>
    <property type="match status" value="1"/>
</dbReference>
<dbReference type="HAMAP" id="MF_00090">
    <property type="entry name" value="PIMT"/>
    <property type="match status" value="1"/>
</dbReference>
<dbReference type="InterPro" id="IPR000682">
    <property type="entry name" value="PCMT"/>
</dbReference>
<dbReference type="InterPro" id="IPR029063">
    <property type="entry name" value="SAM-dependent_MTases_sf"/>
</dbReference>
<dbReference type="NCBIfam" id="TIGR00080">
    <property type="entry name" value="pimt"/>
    <property type="match status" value="1"/>
</dbReference>
<dbReference type="NCBIfam" id="NF001453">
    <property type="entry name" value="PRK00312.1"/>
    <property type="match status" value="1"/>
</dbReference>
<dbReference type="PANTHER" id="PTHR11579">
    <property type="entry name" value="PROTEIN-L-ISOASPARTATE O-METHYLTRANSFERASE"/>
    <property type="match status" value="1"/>
</dbReference>
<dbReference type="PANTHER" id="PTHR11579:SF0">
    <property type="entry name" value="PROTEIN-L-ISOASPARTATE(D-ASPARTATE) O-METHYLTRANSFERASE"/>
    <property type="match status" value="1"/>
</dbReference>
<dbReference type="Pfam" id="PF01135">
    <property type="entry name" value="PCMT"/>
    <property type="match status" value="1"/>
</dbReference>
<dbReference type="SUPFAM" id="SSF53335">
    <property type="entry name" value="S-adenosyl-L-methionine-dependent methyltransferases"/>
    <property type="match status" value="1"/>
</dbReference>
<feature type="chain" id="PRO_0000351927" description="Protein-L-isoaspartate O-methyltransferase 2">
    <location>
        <begin position="1"/>
        <end position="217"/>
    </location>
</feature>
<feature type="active site" evidence="1">
    <location>
        <position position="64"/>
    </location>
</feature>
<keyword id="KW-0963">Cytoplasm</keyword>
<keyword id="KW-0489">Methyltransferase</keyword>
<keyword id="KW-1185">Reference proteome</keyword>
<keyword id="KW-0949">S-adenosyl-L-methionine</keyword>
<keyword id="KW-0808">Transferase</keyword>
<organism>
    <name type="scientific">Rhodopseudomonas palustris (strain HaA2)</name>
    <dbReference type="NCBI Taxonomy" id="316058"/>
    <lineage>
        <taxon>Bacteria</taxon>
        <taxon>Pseudomonadati</taxon>
        <taxon>Pseudomonadota</taxon>
        <taxon>Alphaproteobacteria</taxon>
        <taxon>Hyphomicrobiales</taxon>
        <taxon>Nitrobacteraceae</taxon>
        <taxon>Rhodopseudomonas</taxon>
    </lineage>
</organism>
<evidence type="ECO:0000255" key="1">
    <source>
        <dbReference type="HAMAP-Rule" id="MF_00090"/>
    </source>
</evidence>
<accession>Q2IWH1</accession>
<name>PIMT2_RHOP2</name>
<gene>
    <name evidence="1" type="primary">pcm2</name>
    <name type="ordered locus">RPB_2737</name>
</gene>